<proteinExistence type="evidence at transcript level"/>
<keyword id="KW-0025">Alternative splicing</keyword>
<keyword id="KW-0175">Coiled coil</keyword>
<keyword id="KW-1185">Reference proteome</keyword>
<dbReference type="EMBL" id="AB011137">
    <property type="protein sequence ID" value="BAA25491.2"/>
    <property type="status" value="ALT_SEQ"/>
    <property type="molecule type" value="mRNA"/>
</dbReference>
<dbReference type="EMBL" id="AC098850">
    <property type="status" value="NOT_ANNOTATED_CDS"/>
    <property type="molecule type" value="Genomic_DNA"/>
</dbReference>
<dbReference type="EMBL" id="BC133019">
    <property type="protein sequence ID" value="AAI33020.1"/>
    <property type="molecule type" value="mRNA"/>
</dbReference>
<dbReference type="EMBL" id="AK125971">
    <property type="protein sequence ID" value="BAC86369.1"/>
    <property type="status" value="ALT_FRAME"/>
    <property type="molecule type" value="mRNA"/>
</dbReference>
<dbReference type="CCDS" id="CCDS45621.1">
    <molecule id="A2RUR9-1"/>
</dbReference>
<dbReference type="RefSeq" id="NP_055510.1">
    <molecule id="A2RUR9-1"/>
    <property type="nucleotide sequence ID" value="NM_014695.3"/>
</dbReference>
<dbReference type="SMR" id="A2RUR9"/>
<dbReference type="BioGRID" id="115069">
    <property type="interactions" value="6"/>
</dbReference>
<dbReference type="FunCoup" id="A2RUR9">
    <property type="interactions" value="16"/>
</dbReference>
<dbReference type="IntAct" id="A2RUR9">
    <property type="interactions" value="1"/>
</dbReference>
<dbReference type="STRING" id="9606.ENSP00000353717"/>
<dbReference type="iPTMnet" id="A2RUR9"/>
<dbReference type="PhosphoSitePlus" id="A2RUR9"/>
<dbReference type="SwissPalm" id="A2RUR9"/>
<dbReference type="BioMuta" id="CCDC144A"/>
<dbReference type="jPOST" id="A2RUR9"/>
<dbReference type="MassIVE" id="A2RUR9"/>
<dbReference type="PaxDb" id="9606-ENSP00000353717"/>
<dbReference type="PeptideAtlas" id="A2RUR9"/>
<dbReference type="ProteomicsDB" id="516">
    <molecule id="A2RUR9-1"/>
</dbReference>
<dbReference type="ProteomicsDB" id="517">
    <molecule id="A2RUR9-2"/>
</dbReference>
<dbReference type="ProteomicsDB" id="518">
    <molecule id="A2RUR9-3"/>
</dbReference>
<dbReference type="Pumba" id="A2RUR9"/>
<dbReference type="Antibodypedia" id="6447">
    <property type="antibodies" value="38 antibodies from 11 providers"/>
</dbReference>
<dbReference type="DNASU" id="9720"/>
<dbReference type="Ensembl" id="ENST00000360524.12">
    <molecule id="A2RUR9-1"/>
    <property type="protein sequence ID" value="ENSP00000353717.8"/>
    <property type="gene ID" value="ENSG00000170160.19"/>
</dbReference>
<dbReference type="GeneID" id="9720"/>
<dbReference type="KEGG" id="hsa:9720"/>
<dbReference type="UCSC" id="uc002gqk.2">
    <molecule id="A2RUR9-1"/>
    <property type="organism name" value="human"/>
</dbReference>
<dbReference type="AGR" id="HGNC:29072"/>
<dbReference type="CTD" id="9720"/>
<dbReference type="DisGeNET" id="9720"/>
<dbReference type="GeneCards" id="CCDC144A"/>
<dbReference type="HGNC" id="HGNC:29072">
    <property type="gene designation" value="CCDC144A"/>
</dbReference>
<dbReference type="HPA" id="ENSG00000170160">
    <property type="expression patterns" value="Tissue enhanced (retina)"/>
</dbReference>
<dbReference type="MIM" id="619413">
    <property type="type" value="gene"/>
</dbReference>
<dbReference type="neXtProt" id="NX_A2RUR9"/>
<dbReference type="OpenTargets" id="ENSG00000170160"/>
<dbReference type="PharmGKB" id="PA162381473"/>
<dbReference type="VEuPathDB" id="HostDB:ENSG00000170160"/>
<dbReference type="eggNOG" id="KOG0504">
    <property type="taxonomic scope" value="Eukaryota"/>
</dbReference>
<dbReference type="GeneTree" id="ENSGT00940000166080"/>
<dbReference type="InParanoid" id="A2RUR9"/>
<dbReference type="OrthoDB" id="9483696at2759"/>
<dbReference type="PAN-GO" id="A2RUR9">
    <property type="GO annotations" value="0 GO annotations based on evolutionary models"/>
</dbReference>
<dbReference type="PhylomeDB" id="A2RUR9"/>
<dbReference type="TreeFam" id="TF342629"/>
<dbReference type="PathwayCommons" id="A2RUR9"/>
<dbReference type="SignaLink" id="A2RUR9"/>
<dbReference type="BioGRID-ORCS" id="9720">
    <property type="hits" value="151 hits in 1095 CRISPR screens"/>
</dbReference>
<dbReference type="ChiTaRS" id="CCDC144A">
    <property type="organism name" value="human"/>
</dbReference>
<dbReference type="GenomeRNAi" id="9720"/>
<dbReference type="Pharos" id="A2RUR9">
    <property type="development level" value="Tdark"/>
</dbReference>
<dbReference type="PRO" id="PR:A2RUR9"/>
<dbReference type="Proteomes" id="UP000005640">
    <property type="component" value="Chromosome 17"/>
</dbReference>
<dbReference type="RNAct" id="A2RUR9">
    <property type="molecule type" value="protein"/>
</dbReference>
<dbReference type="Bgee" id="ENSG00000170160">
    <property type="expression patterns" value="Expressed in male germ line stem cell (sensu Vertebrata) in testis and 104 other cell types or tissues"/>
</dbReference>
<dbReference type="ExpressionAtlas" id="A2RUR9">
    <property type="expression patterns" value="baseline and differential"/>
</dbReference>
<dbReference type="InterPro" id="IPR040118">
    <property type="entry name" value="C144A/B/C"/>
</dbReference>
<dbReference type="InterPro" id="IPR039497">
    <property type="entry name" value="CC144C-like_CC_dom"/>
</dbReference>
<dbReference type="InterPro" id="IPR021885">
    <property type="entry name" value="DUF3496"/>
</dbReference>
<dbReference type="PANTHER" id="PTHR22245">
    <property type="entry name" value="COILED-COIL DOMAIN-CONTAINING PROTEIN 144A-RELATED"/>
    <property type="match status" value="1"/>
</dbReference>
<dbReference type="PANTHER" id="PTHR22245:SF3">
    <property type="entry name" value="COILED-COIL DOMAIN-CONTAINING PROTEIN 144A-RELATED"/>
    <property type="match status" value="1"/>
</dbReference>
<dbReference type="Pfam" id="PF14915">
    <property type="entry name" value="CCDC144C"/>
    <property type="match status" value="1"/>
</dbReference>
<dbReference type="Pfam" id="PF12001">
    <property type="entry name" value="DUF3496"/>
    <property type="match status" value="1"/>
</dbReference>
<evidence type="ECO:0000255" key="1"/>
<evidence type="ECO:0000256" key="2">
    <source>
        <dbReference type="SAM" id="MobiDB-lite"/>
    </source>
</evidence>
<evidence type="ECO:0000269" key="3">
    <source>
    </source>
</evidence>
<evidence type="ECO:0000303" key="4">
    <source>
    </source>
</evidence>
<evidence type="ECO:0000303" key="5">
    <source>
    </source>
</evidence>
<evidence type="ECO:0000305" key="6"/>
<accession>A2RUR9</accession>
<accession>O60311</accession>
<accession>Q6ZU57</accession>
<reference key="1">
    <citation type="journal article" date="1998" name="DNA Res.">
        <title>Prediction of the coding sequences of unidentified human genes. IX. The complete sequences of 100 new cDNA clones from brain which can code for large proteins in vitro.</title>
        <authorList>
            <person name="Nagase T."/>
            <person name="Ishikawa K."/>
            <person name="Miyajima N."/>
            <person name="Tanaka A."/>
            <person name="Kotani H."/>
            <person name="Nomura N."/>
            <person name="Ohara O."/>
        </authorList>
    </citation>
    <scope>NUCLEOTIDE SEQUENCE [LARGE SCALE MRNA] (ISOFORM 2)</scope>
    <source>
        <tissue>Brain</tissue>
    </source>
</reference>
<reference key="2">
    <citation type="submission" date="1999-12" db="EMBL/GenBank/DDBJ databases">
        <authorList>
            <person name="Ohara O."/>
            <person name="Nagase T."/>
            <person name="Ishikawa K."/>
        </authorList>
    </citation>
    <scope>SEQUENCE REVISION</scope>
</reference>
<reference key="3">
    <citation type="journal article" date="2006" name="Nature">
        <title>DNA sequence of human chromosome 17 and analysis of rearrangement in the human lineage.</title>
        <authorList>
            <person name="Zody M.C."/>
            <person name="Garber M."/>
            <person name="Adams D.J."/>
            <person name="Sharpe T."/>
            <person name="Harrow J."/>
            <person name="Lupski J.R."/>
            <person name="Nicholson C."/>
            <person name="Searle S.M."/>
            <person name="Wilming L."/>
            <person name="Young S.K."/>
            <person name="Abouelleil A."/>
            <person name="Allen N.R."/>
            <person name="Bi W."/>
            <person name="Bloom T."/>
            <person name="Borowsky M.L."/>
            <person name="Bugalter B.E."/>
            <person name="Butler J."/>
            <person name="Chang J.L."/>
            <person name="Chen C.-K."/>
            <person name="Cook A."/>
            <person name="Corum B."/>
            <person name="Cuomo C.A."/>
            <person name="de Jong P.J."/>
            <person name="DeCaprio D."/>
            <person name="Dewar K."/>
            <person name="FitzGerald M."/>
            <person name="Gilbert J."/>
            <person name="Gibson R."/>
            <person name="Gnerre S."/>
            <person name="Goldstein S."/>
            <person name="Grafham D.V."/>
            <person name="Grocock R."/>
            <person name="Hafez N."/>
            <person name="Hagopian D.S."/>
            <person name="Hart E."/>
            <person name="Norman C.H."/>
            <person name="Humphray S."/>
            <person name="Jaffe D.B."/>
            <person name="Jones M."/>
            <person name="Kamal M."/>
            <person name="Khodiyar V.K."/>
            <person name="LaButti K."/>
            <person name="Laird G."/>
            <person name="Lehoczky J."/>
            <person name="Liu X."/>
            <person name="Lokyitsang T."/>
            <person name="Loveland J."/>
            <person name="Lui A."/>
            <person name="Macdonald P."/>
            <person name="Major J.E."/>
            <person name="Matthews L."/>
            <person name="Mauceli E."/>
            <person name="McCarroll S.A."/>
            <person name="Mihalev A.H."/>
            <person name="Mudge J."/>
            <person name="Nguyen C."/>
            <person name="Nicol R."/>
            <person name="O'Leary S.B."/>
            <person name="Osoegawa K."/>
            <person name="Schwartz D.C."/>
            <person name="Shaw-Smith C."/>
            <person name="Stankiewicz P."/>
            <person name="Steward C."/>
            <person name="Swarbreck D."/>
            <person name="Venkataraman V."/>
            <person name="Whittaker C.A."/>
            <person name="Yang X."/>
            <person name="Zimmer A.R."/>
            <person name="Bradley A."/>
            <person name="Hubbard T."/>
            <person name="Birren B.W."/>
            <person name="Rogers J."/>
            <person name="Lander E.S."/>
            <person name="Nusbaum C."/>
        </authorList>
    </citation>
    <scope>NUCLEOTIDE SEQUENCE [LARGE SCALE GENOMIC DNA]</scope>
</reference>
<reference key="4">
    <citation type="journal article" date="2004" name="Genome Res.">
        <title>The status, quality, and expansion of the NIH full-length cDNA project: the Mammalian Gene Collection (MGC).</title>
        <authorList>
            <consortium name="The MGC Project Team"/>
        </authorList>
    </citation>
    <scope>NUCLEOTIDE SEQUENCE [LARGE SCALE MRNA] (ISOFORM 1)</scope>
</reference>
<reference key="5">
    <citation type="journal article" date="2004" name="Nat. Genet.">
        <title>Complete sequencing and characterization of 21,243 full-length human cDNAs.</title>
        <authorList>
            <person name="Ota T."/>
            <person name="Suzuki Y."/>
            <person name="Nishikawa T."/>
            <person name="Otsuki T."/>
            <person name="Sugiyama T."/>
            <person name="Irie R."/>
            <person name="Wakamatsu A."/>
            <person name="Hayashi K."/>
            <person name="Sato H."/>
            <person name="Nagai K."/>
            <person name="Kimura K."/>
            <person name="Makita H."/>
            <person name="Sekine M."/>
            <person name="Obayashi M."/>
            <person name="Nishi T."/>
            <person name="Shibahara T."/>
            <person name="Tanaka T."/>
            <person name="Ishii S."/>
            <person name="Yamamoto J."/>
            <person name="Saito K."/>
            <person name="Kawai Y."/>
            <person name="Isono Y."/>
            <person name="Nakamura Y."/>
            <person name="Nagahari K."/>
            <person name="Murakami K."/>
            <person name="Yasuda T."/>
            <person name="Iwayanagi T."/>
            <person name="Wagatsuma M."/>
            <person name="Shiratori A."/>
            <person name="Sudo H."/>
            <person name="Hosoiri T."/>
            <person name="Kaku Y."/>
            <person name="Kodaira H."/>
            <person name="Kondo H."/>
            <person name="Sugawara M."/>
            <person name="Takahashi M."/>
            <person name="Kanda K."/>
            <person name="Yokoi T."/>
            <person name="Furuya T."/>
            <person name="Kikkawa E."/>
            <person name="Omura Y."/>
            <person name="Abe K."/>
            <person name="Kamihara K."/>
            <person name="Katsuta N."/>
            <person name="Sato K."/>
            <person name="Tanikawa M."/>
            <person name="Yamazaki M."/>
            <person name="Ninomiya K."/>
            <person name="Ishibashi T."/>
            <person name="Yamashita H."/>
            <person name="Murakawa K."/>
            <person name="Fujimori K."/>
            <person name="Tanai H."/>
            <person name="Kimata M."/>
            <person name="Watanabe M."/>
            <person name="Hiraoka S."/>
            <person name="Chiba Y."/>
            <person name="Ishida S."/>
            <person name="Ono Y."/>
            <person name="Takiguchi S."/>
            <person name="Watanabe S."/>
            <person name="Yosida M."/>
            <person name="Hotuta T."/>
            <person name="Kusano J."/>
            <person name="Kanehori K."/>
            <person name="Takahashi-Fujii A."/>
            <person name="Hara H."/>
            <person name="Tanase T.-O."/>
            <person name="Nomura Y."/>
            <person name="Togiya S."/>
            <person name="Komai F."/>
            <person name="Hara R."/>
            <person name="Takeuchi K."/>
            <person name="Arita M."/>
            <person name="Imose N."/>
            <person name="Musashino K."/>
            <person name="Yuuki H."/>
            <person name="Oshima A."/>
            <person name="Sasaki N."/>
            <person name="Aotsuka S."/>
            <person name="Yoshikawa Y."/>
            <person name="Matsunawa H."/>
            <person name="Ichihara T."/>
            <person name="Shiohata N."/>
            <person name="Sano S."/>
            <person name="Moriya S."/>
            <person name="Momiyama H."/>
            <person name="Satoh N."/>
            <person name="Takami S."/>
            <person name="Terashima Y."/>
            <person name="Suzuki O."/>
            <person name="Nakagawa S."/>
            <person name="Senoh A."/>
            <person name="Mizoguchi H."/>
            <person name="Goto Y."/>
            <person name="Shimizu F."/>
            <person name="Wakebe H."/>
            <person name="Hishigaki H."/>
            <person name="Watanabe T."/>
            <person name="Sugiyama A."/>
            <person name="Takemoto M."/>
            <person name="Kawakami B."/>
            <person name="Yamazaki M."/>
            <person name="Watanabe K."/>
            <person name="Kumagai A."/>
            <person name="Itakura S."/>
            <person name="Fukuzumi Y."/>
            <person name="Fujimori Y."/>
            <person name="Komiyama M."/>
            <person name="Tashiro H."/>
            <person name="Tanigami A."/>
            <person name="Fujiwara T."/>
            <person name="Ono T."/>
            <person name="Yamada K."/>
            <person name="Fujii Y."/>
            <person name="Ozaki K."/>
            <person name="Hirao M."/>
            <person name="Ohmori Y."/>
            <person name="Kawabata A."/>
            <person name="Hikiji T."/>
            <person name="Kobatake N."/>
            <person name="Inagaki H."/>
            <person name="Ikema Y."/>
            <person name="Okamoto S."/>
            <person name="Okitani R."/>
            <person name="Kawakami T."/>
            <person name="Noguchi S."/>
            <person name="Itoh T."/>
            <person name="Shigeta K."/>
            <person name="Senba T."/>
            <person name="Matsumura K."/>
            <person name="Nakajima Y."/>
            <person name="Mizuno T."/>
            <person name="Morinaga M."/>
            <person name="Sasaki M."/>
            <person name="Togashi T."/>
            <person name="Oyama M."/>
            <person name="Hata H."/>
            <person name="Watanabe M."/>
            <person name="Komatsu T."/>
            <person name="Mizushima-Sugano J."/>
            <person name="Satoh T."/>
            <person name="Shirai Y."/>
            <person name="Takahashi Y."/>
            <person name="Nakagawa K."/>
            <person name="Okumura K."/>
            <person name="Nagase T."/>
            <person name="Nomura N."/>
            <person name="Kikuchi H."/>
            <person name="Masuho Y."/>
            <person name="Yamashita R."/>
            <person name="Nakai K."/>
            <person name="Yada T."/>
            <person name="Nakamura Y."/>
            <person name="Ohara O."/>
            <person name="Isogai T."/>
            <person name="Sugano S."/>
        </authorList>
    </citation>
    <scope>NUCLEOTIDE SEQUENCE [LARGE SCALE MRNA] OF 238-1410 (ISOFORM 3)</scope>
    <source>
        <tissue>Testis</tissue>
    </source>
</reference>
<reference key="6">
    <citation type="journal article" date="2020" name="Life Sci.">
        <title>Human kidney stone matrix proteins alleviate hyperoxaluria induced renal stress by targeting cell-crystal interactions.</title>
        <authorList>
            <person name="Narula S."/>
            <person name="Tandon S."/>
            <person name="Kumar D."/>
            <person name="Varshney S."/>
            <person name="Adlakha K."/>
            <person name="Sengupta S."/>
            <person name="Singh S.K."/>
            <person name="Tandon C."/>
        </authorList>
    </citation>
    <scope>FUNCTION</scope>
</reference>
<name>C144A_HUMAN</name>
<comment type="function">
    <text evidence="3">May play a role in preventing the formation of kidney stones through inhibition of calcium oxalate monohydrate (COM) crystallization, attenuating COM-induced apoptotic injury to renal epithelial cells (PubMed:32991878). May exhibit antilithiatic (preventing the formation of kidney stones) activity through crystal binding, hindering the crystal attachment to renal epithelial cells, a pre-requisite to initiate inflammatory response (PubMed:32991878).</text>
</comment>
<comment type="alternative products">
    <event type="alternative splicing"/>
    <isoform>
        <id>A2RUR9-1</id>
        <name>1</name>
        <sequence type="displayed"/>
    </isoform>
    <isoform>
        <id>A2RUR9-2</id>
        <name>2</name>
        <sequence type="described" ref="VSP_029787 VSP_029789 VSP_029791"/>
    </isoform>
    <isoform>
        <id>A2RUR9-3</id>
        <name>3</name>
        <sequence type="described" ref="VSP_029788 VSP_029790 VSP_029791"/>
    </isoform>
</comment>
<comment type="similarity">
    <text evidence="6">Belongs to the CCDC144 family.</text>
</comment>
<comment type="sequence caution" evidence="6">
    <conflict type="erroneous initiation">
        <sequence resource="EMBL-CDS" id="BAA25491"/>
    </conflict>
    <text>Extended N-terminus.</text>
</comment>
<comment type="sequence caution" evidence="6">
    <conflict type="frameshift">
        <sequence resource="EMBL-CDS" id="BAA25491"/>
    </conflict>
</comment>
<comment type="sequence caution" evidence="6">
    <conflict type="frameshift">
        <sequence resource="EMBL-CDS" id="BAC86369"/>
    </conflict>
</comment>
<protein>
    <recommendedName>
        <fullName>Coiled-coil domain-containing protein 144A</fullName>
    </recommendedName>
</protein>
<organism>
    <name type="scientific">Homo sapiens</name>
    <name type="common">Human</name>
    <dbReference type="NCBI Taxonomy" id="9606"/>
    <lineage>
        <taxon>Eukaryota</taxon>
        <taxon>Metazoa</taxon>
        <taxon>Chordata</taxon>
        <taxon>Craniata</taxon>
        <taxon>Vertebrata</taxon>
        <taxon>Euteleostomi</taxon>
        <taxon>Mammalia</taxon>
        <taxon>Eutheria</taxon>
        <taxon>Euarchontoglires</taxon>
        <taxon>Primates</taxon>
        <taxon>Haplorrhini</taxon>
        <taxon>Catarrhini</taxon>
        <taxon>Hominidae</taxon>
        <taxon>Homo</taxon>
    </lineage>
</organism>
<feature type="chain" id="PRO_0000312279" description="Coiled-coil domain-containing protein 144A">
    <location>
        <begin position="1"/>
        <end position="1427"/>
    </location>
</feature>
<feature type="region of interest" description="Disordered" evidence="2">
    <location>
        <begin position="1"/>
        <end position="32"/>
    </location>
</feature>
<feature type="region of interest" description="Disordered" evidence="2">
    <location>
        <begin position="87"/>
        <end position="189"/>
    </location>
</feature>
<feature type="region of interest" description="Disordered" evidence="2">
    <location>
        <begin position="213"/>
        <end position="261"/>
    </location>
</feature>
<feature type="region of interest" description="Disordered" evidence="2">
    <location>
        <begin position="453"/>
        <end position="485"/>
    </location>
</feature>
<feature type="region of interest" description="Disordered" evidence="2">
    <location>
        <begin position="528"/>
        <end position="586"/>
    </location>
</feature>
<feature type="coiled-coil region" evidence="1">
    <location>
        <begin position="490"/>
        <end position="545"/>
    </location>
</feature>
<feature type="coiled-coil region" evidence="1">
    <location>
        <begin position="648"/>
        <end position="1129"/>
    </location>
</feature>
<feature type="coiled-coil region" evidence="1">
    <location>
        <begin position="1155"/>
        <end position="1309"/>
    </location>
</feature>
<feature type="compositionally biased region" description="Basic and acidic residues" evidence="2">
    <location>
        <begin position="1"/>
        <end position="11"/>
    </location>
</feature>
<feature type="compositionally biased region" description="Polar residues" evidence="2">
    <location>
        <begin position="129"/>
        <end position="150"/>
    </location>
</feature>
<feature type="compositionally biased region" description="Polar residues" evidence="2">
    <location>
        <begin position="167"/>
        <end position="178"/>
    </location>
</feature>
<feature type="compositionally biased region" description="Acidic residues" evidence="2">
    <location>
        <begin position="224"/>
        <end position="234"/>
    </location>
</feature>
<feature type="compositionally biased region" description="Polar residues" evidence="2">
    <location>
        <begin position="453"/>
        <end position="467"/>
    </location>
</feature>
<feature type="compositionally biased region" description="Basic and acidic residues" evidence="2">
    <location>
        <begin position="528"/>
        <end position="537"/>
    </location>
</feature>
<feature type="compositionally biased region" description="Low complexity" evidence="2">
    <location>
        <begin position="543"/>
        <end position="552"/>
    </location>
</feature>
<feature type="compositionally biased region" description="Basic and acidic residues" evidence="2">
    <location>
        <begin position="563"/>
        <end position="584"/>
    </location>
</feature>
<feature type="splice variant" id="VSP_029787" description="In isoform 2." evidence="5">
    <location>
        <begin position="1"/>
        <end position="697"/>
    </location>
</feature>
<feature type="splice variant" id="VSP_029788" description="In isoform 3." evidence="4">
    <location>
        <begin position="247"/>
        <end position="526"/>
    </location>
</feature>
<feature type="splice variant" id="VSP_029789" description="In isoform 2." evidence="5">
    <original>LYDL</original>
    <variation>MFNC</variation>
    <location>
        <begin position="698"/>
        <end position="701"/>
    </location>
</feature>
<feature type="splice variant" id="VSP_029790" description="In isoform 3." evidence="4">
    <original>K</original>
    <variation>KVVMREFQQEWTDLLKQQPTSEATSRCHINLDETQDSKKKLGQIRSE</variation>
    <location>
        <position position="1124"/>
    </location>
</feature>
<feature type="splice variant" id="VSP_029791" description="In isoform 2 and isoform 3." evidence="4 5">
    <original>MQQKLQNDLTAEVAGSSQTGLHRIPQCSSFSSSSLHLLLCSICQPFFLILQLLLNMNLDPI</original>
    <variation>VSYLFSFGVQISDRILVCYLVK</variation>
    <location>
        <begin position="1367"/>
        <end position="1427"/>
    </location>
</feature>
<feature type="sequence conflict" description="In Ref. 5; BAC86369." evidence="6" ref="5">
    <original>Q</original>
    <variation>R</variation>
    <location>
        <position position="1085"/>
    </location>
</feature>
<gene>
    <name type="primary">CCDC144A</name>
    <name type="synonym">KIAA0565</name>
</gene>
<sequence length="1427" mass="165125">MASWGGEKRGGAEGSPKPAVYATRKTPSVGSQGDQWYLGYPGDQWSSGFPYSWWKNSVGSESKHGEGALDQPQHDVRLEDLGELHRAARSGDVPGVEHILAPGDTGVDKRDRKKSIQQLVPEYKEKQTPESLPQNNNPDWHPTNLTLSDETCQRSKNLKVDDKCPSVSPSMPENQSATKELGQMNLTEREKMDTGVVLLSGNDTLHDLCQSQLPENKESKEAEQDSELTSEEEQERLKGCENKQPQKTSQEPEMAKDCDREDIPIYPVLPHVQKSEEMWIEQGKLEWKNQLKLVINELKQRFGEIYEKYKIPACPEEEPLLDNSTRGTDVKDIPFNLTNNIPGCEEEDASEISVSVVFETFPEQKEPSLKNIIHPYYHPYSGSQEHVCQSSSKFHLHENKLDCDNDNKPGIGHIFSTDKNFHNDASTKKARNPEVVMVEMKEDQEFDLQMTKNMNQNSDSGSTNNYKSLKPKLENLSSLPPDSDRTSEVYLHEELQQDMQKFKNEVNTLEEEFLALKKEDVQLHKDVEEEMEKHRSNSTELSGTLTDGTTVGNDDDGLNQQIPRKENGEHDRPADKTSNEKNEVKNQIYPEADFADSMEPSEIASEDCELSHSVYENFMLLIEQLRMEYKDSASLPRIQDTFCLCEHLLKLKNNHCDQLTVKLKQMENMVSVLQNELSETKKTKLQLELQKIEWEKELYDLRLALKQENEEKRNADMLYNKDSEQLRIKEEECGKVVETKQQLKWNLRRLVKELRTVRNNLDLVVQERNDAQKQLSEEQDARILQDQILTSKQKELEMARKKMNSEISHRHQKEKDLFHEDCMLQEEIALLRLEIDTIKNQNKQKEKKYFEDIEAVKEKNDNLQKIIKLNEETLTETILQYSGQLNNLTAENKILNSELENGKQNQERLEIEMESYRCRLAAAVRDCDQSQTARDLKLDFQRTRQEWVRLHDKMKVDMSGLQAKNEILSEKLSNAESKINSLQIQLHNTRDALGRESLILERVQRDLSQTQCQKKETEQMYQIEQSKLKKYIAKQESVEERLSQLQSENMLLRQQLDDAHKKANSQEKTSSTIQDQFHSAAKNLQAESEKQILSLQEKNKELMDEYNHLKERMDQCEKEKAGRKIDLTEAQETVPSRCLHLDAENEVLQLQQTLFSMKAIQKQCETLQKNKKQLKQEVVNLKSYMERNMLERGKAEWHKLLIEERARKEIEEKLNEAILTLQKQAAVSHEQLVQLREDNTTSIKTQMELTIKDLESEISRIKTSQADFNKTELERYKELYLEEVKVRESLSNELSRTNEMIAEVSTQLTVEKEQTRSRSLFTAYATRPVLESPCVGNLNDSEGLNRKHIPRKKRSALKDMESYLLKMQQKLQNDLTAEVAGSSQTGLHRIPQCSSFSSSSLHLLLCSICQPFFLILQLLLNMNLDPI</sequence>